<proteinExistence type="inferred from homology"/>
<keyword id="KW-0997">Cell inner membrane</keyword>
<keyword id="KW-1003">Cell membrane</keyword>
<keyword id="KW-0963">Cytoplasm</keyword>
<keyword id="KW-0472">Membrane</keyword>
<gene>
    <name evidence="1" type="primary">hflD</name>
    <name type="ordered locus">YPN_1994</name>
    <name type="ORF">YP516_2220</name>
</gene>
<evidence type="ECO:0000255" key="1">
    <source>
        <dbReference type="HAMAP-Rule" id="MF_00695"/>
    </source>
</evidence>
<comment type="subcellular location">
    <subcellularLocation>
        <location>Cytoplasm</location>
    </subcellularLocation>
    <subcellularLocation>
        <location evidence="1">Cell inner membrane</location>
        <topology evidence="1">Peripheral membrane protein</topology>
        <orientation evidence="1">Cytoplasmic side</orientation>
    </subcellularLocation>
</comment>
<comment type="similarity">
    <text evidence="1">Belongs to the HflD family.</text>
</comment>
<name>HFLD_YERPN</name>
<feature type="chain" id="PRO_1000045457" description="High frequency lysogenization protein HflD homolog">
    <location>
        <begin position="1"/>
        <end position="208"/>
    </location>
</feature>
<dbReference type="EMBL" id="CP000305">
    <property type="protein sequence ID" value="ABG18323.1"/>
    <property type="molecule type" value="Genomic_DNA"/>
</dbReference>
<dbReference type="EMBL" id="ACNQ01000011">
    <property type="protein sequence ID" value="EEO76620.1"/>
    <property type="molecule type" value="Genomic_DNA"/>
</dbReference>
<dbReference type="RefSeq" id="WP_002210914.1">
    <property type="nucleotide sequence ID" value="NZ_ACNQ01000011.1"/>
</dbReference>
<dbReference type="SMR" id="Q1CI57"/>
<dbReference type="GeneID" id="57976936"/>
<dbReference type="KEGG" id="ypn:YPN_1994"/>
<dbReference type="HOGENOM" id="CLU_098920_0_0_6"/>
<dbReference type="Proteomes" id="UP000008936">
    <property type="component" value="Chromosome"/>
</dbReference>
<dbReference type="GO" id="GO:0005737">
    <property type="term" value="C:cytoplasm"/>
    <property type="evidence" value="ECO:0007669"/>
    <property type="project" value="UniProtKB-SubCell"/>
</dbReference>
<dbReference type="GO" id="GO:0005886">
    <property type="term" value="C:plasma membrane"/>
    <property type="evidence" value="ECO:0007669"/>
    <property type="project" value="UniProtKB-SubCell"/>
</dbReference>
<dbReference type="FunFam" id="1.10.3890.10:FF:000001">
    <property type="entry name" value="High frequency lysogenization protein HflD homolog"/>
    <property type="match status" value="1"/>
</dbReference>
<dbReference type="Gene3D" id="1.10.3890.10">
    <property type="entry name" value="HflD-like"/>
    <property type="match status" value="1"/>
</dbReference>
<dbReference type="HAMAP" id="MF_00695">
    <property type="entry name" value="HflD_protein"/>
    <property type="match status" value="1"/>
</dbReference>
<dbReference type="InterPro" id="IPR007451">
    <property type="entry name" value="HflD"/>
</dbReference>
<dbReference type="InterPro" id="IPR035932">
    <property type="entry name" value="HflD-like_sf"/>
</dbReference>
<dbReference type="NCBIfam" id="NF001246">
    <property type="entry name" value="PRK00218.1-2"/>
    <property type="match status" value="1"/>
</dbReference>
<dbReference type="NCBIfam" id="NF001248">
    <property type="entry name" value="PRK00218.1-4"/>
    <property type="match status" value="1"/>
</dbReference>
<dbReference type="NCBIfam" id="NF001249">
    <property type="entry name" value="PRK00218.1-5"/>
    <property type="match status" value="1"/>
</dbReference>
<dbReference type="PANTHER" id="PTHR38100">
    <property type="entry name" value="HIGH FREQUENCY LYSOGENIZATION PROTEIN HFLD"/>
    <property type="match status" value="1"/>
</dbReference>
<dbReference type="PANTHER" id="PTHR38100:SF1">
    <property type="entry name" value="HIGH FREQUENCY LYSOGENIZATION PROTEIN HFLD"/>
    <property type="match status" value="1"/>
</dbReference>
<dbReference type="Pfam" id="PF04356">
    <property type="entry name" value="DUF489"/>
    <property type="match status" value="1"/>
</dbReference>
<dbReference type="SUPFAM" id="SSF101322">
    <property type="entry name" value="YcfC-like"/>
    <property type="match status" value="1"/>
</dbReference>
<reference key="1">
    <citation type="journal article" date="2006" name="J. Bacteriol.">
        <title>Complete genome sequence of Yersinia pestis strains Antiqua and Nepal516: evidence of gene reduction in an emerging pathogen.</title>
        <authorList>
            <person name="Chain P.S.G."/>
            <person name="Hu P."/>
            <person name="Malfatti S.A."/>
            <person name="Radnedge L."/>
            <person name="Larimer F."/>
            <person name="Vergez L.M."/>
            <person name="Worsham P."/>
            <person name="Chu M.C."/>
            <person name="Andersen G.L."/>
        </authorList>
    </citation>
    <scope>NUCLEOTIDE SEQUENCE [LARGE SCALE GENOMIC DNA]</scope>
    <source>
        <strain>Nepal516</strain>
    </source>
</reference>
<reference key="2">
    <citation type="submission" date="2009-04" db="EMBL/GenBank/DDBJ databases">
        <title>Yersinia pestis Nepal516A whole genome shotgun sequencing project.</title>
        <authorList>
            <person name="Plunkett G. III"/>
            <person name="Anderson B.D."/>
            <person name="Baumler D.J."/>
            <person name="Burland V."/>
            <person name="Cabot E.L."/>
            <person name="Glasner J.D."/>
            <person name="Mau B."/>
            <person name="Neeno-Eckwall E."/>
            <person name="Perna N.T."/>
            <person name="Munk A.C."/>
            <person name="Tapia R."/>
            <person name="Green L.D."/>
            <person name="Rogers Y.C."/>
            <person name="Detter J.C."/>
            <person name="Bruce D.C."/>
            <person name="Brettin T.S."/>
        </authorList>
    </citation>
    <scope>NUCLEOTIDE SEQUENCE [LARGE SCALE GENOMIC DNA]</scope>
    <source>
        <strain>Nepal516</strain>
    </source>
</reference>
<organism>
    <name type="scientific">Yersinia pestis bv. Antiqua (strain Nepal516)</name>
    <dbReference type="NCBI Taxonomy" id="377628"/>
    <lineage>
        <taxon>Bacteria</taxon>
        <taxon>Pseudomonadati</taxon>
        <taxon>Pseudomonadota</taxon>
        <taxon>Gammaproteobacteria</taxon>
        <taxon>Enterobacterales</taxon>
        <taxon>Yersiniaceae</taxon>
        <taxon>Yersinia</taxon>
    </lineage>
</organism>
<protein>
    <recommendedName>
        <fullName evidence="1">High frequency lysogenization protein HflD homolog</fullName>
    </recommendedName>
</protein>
<accession>Q1CI57</accession>
<accession>C4GTV6</accession>
<sequence length="208" mass="22730">MAKNYYDITLALAGICQSARLVQQLAHEGQCDNDALNTVLRGLLQTNPSSTLAVYGDTEQVLKMGLETLQSVLNANRQGEAAELTRYTLSLMVLERKLSASKSAMNTLGERISQLDRQLAHFDLESETMMSSLASIYVDVVSPLGPRIQVTGSPAILQSPLVQAKVRATLLAGIRSAVLWQQVGGSRLQLMFSRNRLFKQAQSILAHT</sequence>